<dbReference type="EC" id="2.1.1.45" evidence="1"/>
<dbReference type="EMBL" id="CP001321">
    <property type="protein sequence ID" value="ACL33024.1"/>
    <property type="molecule type" value="Genomic_DNA"/>
</dbReference>
<dbReference type="RefSeq" id="WP_015939785.1">
    <property type="nucleotide sequence ID" value="NC_011852.1"/>
</dbReference>
<dbReference type="SMR" id="B8F6S2"/>
<dbReference type="STRING" id="557723.HAPS_1458"/>
<dbReference type="KEGG" id="hap:HAPS_1458"/>
<dbReference type="PATRIC" id="fig|557723.8.peg.1430"/>
<dbReference type="HOGENOM" id="CLU_021669_0_1_6"/>
<dbReference type="UniPathway" id="UPA00575"/>
<dbReference type="Proteomes" id="UP000006743">
    <property type="component" value="Chromosome"/>
</dbReference>
<dbReference type="GO" id="GO:0005829">
    <property type="term" value="C:cytosol"/>
    <property type="evidence" value="ECO:0007669"/>
    <property type="project" value="TreeGrafter"/>
</dbReference>
<dbReference type="GO" id="GO:0004799">
    <property type="term" value="F:thymidylate synthase activity"/>
    <property type="evidence" value="ECO:0007669"/>
    <property type="project" value="UniProtKB-UniRule"/>
</dbReference>
<dbReference type="GO" id="GO:0006231">
    <property type="term" value="P:dTMP biosynthetic process"/>
    <property type="evidence" value="ECO:0007669"/>
    <property type="project" value="UniProtKB-UniRule"/>
</dbReference>
<dbReference type="GO" id="GO:0006235">
    <property type="term" value="P:dTTP biosynthetic process"/>
    <property type="evidence" value="ECO:0007669"/>
    <property type="project" value="UniProtKB-UniRule"/>
</dbReference>
<dbReference type="GO" id="GO:0032259">
    <property type="term" value="P:methylation"/>
    <property type="evidence" value="ECO:0007669"/>
    <property type="project" value="UniProtKB-KW"/>
</dbReference>
<dbReference type="CDD" id="cd00351">
    <property type="entry name" value="TS_Pyrimidine_HMase"/>
    <property type="match status" value="1"/>
</dbReference>
<dbReference type="Gene3D" id="3.30.572.10">
    <property type="entry name" value="Thymidylate synthase/dCMP hydroxymethylase domain"/>
    <property type="match status" value="1"/>
</dbReference>
<dbReference type="HAMAP" id="MF_00008">
    <property type="entry name" value="Thymidy_synth_bact"/>
    <property type="match status" value="1"/>
</dbReference>
<dbReference type="InterPro" id="IPR045097">
    <property type="entry name" value="Thymidate_synth/dCMP_Mease"/>
</dbReference>
<dbReference type="InterPro" id="IPR023451">
    <property type="entry name" value="Thymidate_synth/dCMP_Mease_dom"/>
</dbReference>
<dbReference type="InterPro" id="IPR036926">
    <property type="entry name" value="Thymidate_synth/dCMP_Mease_sf"/>
</dbReference>
<dbReference type="InterPro" id="IPR000398">
    <property type="entry name" value="Thymidylate_synthase"/>
</dbReference>
<dbReference type="InterPro" id="IPR020940">
    <property type="entry name" value="Thymidylate_synthase_AS"/>
</dbReference>
<dbReference type="NCBIfam" id="NF002498">
    <property type="entry name" value="PRK01827.1-4"/>
    <property type="match status" value="1"/>
</dbReference>
<dbReference type="NCBIfam" id="TIGR03284">
    <property type="entry name" value="thym_sym"/>
    <property type="match status" value="1"/>
</dbReference>
<dbReference type="PANTHER" id="PTHR11548:SF9">
    <property type="entry name" value="THYMIDYLATE SYNTHASE"/>
    <property type="match status" value="1"/>
</dbReference>
<dbReference type="PANTHER" id="PTHR11548">
    <property type="entry name" value="THYMIDYLATE SYNTHASE 1"/>
    <property type="match status" value="1"/>
</dbReference>
<dbReference type="Pfam" id="PF00303">
    <property type="entry name" value="Thymidylat_synt"/>
    <property type="match status" value="1"/>
</dbReference>
<dbReference type="PRINTS" id="PR00108">
    <property type="entry name" value="THYMDSNTHASE"/>
</dbReference>
<dbReference type="SUPFAM" id="SSF55831">
    <property type="entry name" value="Thymidylate synthase/dCMP hydroxymethylase"/>
    <property type="match status" value="1"/>
</dbReference>
<dbReference type="PROSITE" id="PS00091">
    <property type="entry name" value="THYMIDYLATE_SYNTHASE"/>
    <property type="match status" value="1"/>
</dbReference>
<accession>B8F6S2</accession>
<proteinExistence type="inferred from homology"/>
<evidence type="ECO:0000255" key="1">
    <source>
        <dbReference type="HAMAP-Rule" id="MF_00008"/>
    </source>
</evidence>
<reference key="1">
    <citation type="journal article" date="2009" name="J. Bacteriol.">
        <title>Complete genome sequence of Haemophilus parasuis SH0165.</title>
        <authorList>
            <person name="Yue M."/>
            <person name="Yang F."/>
            <person name="Yang J."/>
            <person name="Bei W."/>
            <person name="Cai X."/>
            <person name="Chen L."/>
            <person name="Dong J."/>
            <person name="Zhou R."/>
            <person name="Jin M."/>
            <person name="Jin Q."/>
            <person name="Chen H."/>
        </authorList>
    </citation>
    <scope>NUCLEOTIDE SEQUENCE [LARGE SCALE GENOMIC DNA]</scope>
    <source>
        <strain>SH0165</strain>
    </source>
</reference>
<keyword id="KW-0963">Cytoplasm</keyword>
<keyword id="KW-0489">Methyltransferase</keyword>
<keyword id="KW-0545">Nucleotide biosynthesis</keyword>
<keyword id="KW-1185">Reference proteome</keyword>
<keyword id="KW-0808">Transferase</keyword>
<name>TYSY_GLAP5</name>
<organism>
    <name type="scientific">Glaesserella parasuis serovar 5 (strain SH0165)</name>
    <name type="common">Haemophilus parasuis</name>
    <dbReference type="NCBI Taxonomy" id="557723"/>
    <lineage>
        <taxon>Bacteria</taxon>
        <taxon>Pseudomonadati</taxon>
        <taxon>Pseudomonadota</taxon>
        <taxon>Gammaproteobacteria</taxon>
        <taxon>Pasteurellales</taxon>
        <taxon>Pasteurellaceae</taxon>
        <taxon>Glaesserella</taxon>
    </lineage>
</organism>
<protein>
    <recommendedName>
        <fullName evidence="1">Thymidylate synthase</fullName>
        <shortName evidence="1">TS</shortName>
        <shortName evidence="1">TSase</shortName>
        <ecNumber evidence="1">2.1.1.45</ecNumber>
    </recommendedName>
</protein>
<sequence>MKQYLDLCQRIVEQGKWVENERTGKRCLTVINADLTYDVAKGEFPLVTTRKSFWKAAIAELLGYIRGYDNAADFRQLGTKSWDANANENAAWLTNPHRKGEDDMGLVYGAVGRNFPKVGGGSVDLLRQIVDDLKRGVDNRGEIYTFYHPGAFHMGCLRPCLHSHHFSLLDGTLYLNSTQRSADVPLGLNWNMIQCYTFLALMAQITGHQAGQAFHKIVNAHIYEDQLELMRDVQLKRTPFKAPTLKINPDIKSLEDLETWVTLADFEVEGYEYHPSIQYPFSV</sequence>
<feature type="chain" id="PRO_1000197248" description="Thymidylate synthase">
    <location>
        <begin position="1"/>
        <end position="283"/>
    </location>
</feature>
<feature type="active site" description="Nucleophile" evidence="1">
    <location>
        <position position="160"/>
    </location>
</feature>
<feature type="binding site" evidence="1">
    <location>
        <position position="22"/>
    </location>
    <ligand>
        <name>dUMP</name>
        <dbReference type="ChEBI" id="CHEBI:246422"/>
    </ligand>
</feature>
<feature type="binding site" evidence="1">
    <location>
        <begin position="180"/>
        <end position="183"/>
    </location>
    <ligand>
        <name>dUMP</name>
        <dbReference type="ChEBI" id="CHEBI:246422"/>
    </ligand>
</feature>
<feature type="binding site" evidence="1">
    <location>
        <position position="183"/>
    </location>
    <ligand>
        <name>(6R)-5,10-methylene-5,6,7,8-tetrahydrofolate</name>
        <dbReference type="ChEBI" id="CHEBI:15636"/>
    </ligand>
</feature>
<feature type="binding site" evidence="1">
    <location>
        <position position="191"/>
    </location>
    <ligand>
        <name>dUMP</name>
        <dbReference type="ChEBI" id="CHEBI:246422"/>
    </ligand>
</feature>
<feature type="binding site" evidence="1">
    <location>
        <begin position="221"/>
        <end position="223"/>
    </location>
    <ligand>
        <name>dUMP</name>
        <dbReference type="ChEBI" id="CHEBI:246422"/>
    </ligand>
</feature>
<feature type="binding site" evidence="1">
    <location>
        <position position="282"/>
    </location>
    <ligand>
        <name>(6R)-5,10-methylene-5,6,7,8-tetrahydrofolate</name>
        <dbReference type="ChEBI" id="CHEBI:15636"/>
    </ligand>
</feature>
<comment type="function">
    <text evidence="1">Catalyzes the reductive methylation of 2'-deoxyuridine-5'-monophosphate (dUMP) to 2'-deoxythymidine-5'-monophosphate (dTMP) while utilizing 5,10-methylenetetrahydrofolate (mTHF) as the methyl donor and reductant in the reaction, yielding dihydrofolate (DHF) as a by-product. This enzymatic reaction provides an intracellular de novo source of dTMP, an essential precursor for DNA biosynthesis.</text>
</comment>
<comment type="catalytic activity">
    <reaction evidence="1">
        <text>dUMP + (6R)-5,10-methylene-5,6,7,8-tetrahydrofolate = 7,8-dihydrofolate + dTMP</text>
        <dbReference type="Rhea" id="RHEA:12104"/>
        <dbReference type="ChEBI" id="CHEBI:15636"/>
        <dbReference type="ChEBI" id="CHEBI:57451"/>
        <dbReference type="ChEBI" id="CHEBI:63528"/>
        <dbReference type="ChEBI" id="CHEBI:246422"/>
        <dbReference type="EC" id="2.1.1.45"/>
    </reaction>
</comment>
<comment type="pathway">
    <text evidence="1">Pyrimidine metabolism; dTTP biosynthesis.</text>
</comment>
<comment type="subunit">
    <text evidence="1">Homodimer.</text>
</comment>
<comment type="subcellular location">
    <subcellularLocation>
        <location evidence="1">Cytoplasm</location>
    </subcellularLocation>
</comment>
<comment type="similarity">
    <text evidence="1">Belongs to the thymidylate synthase family. Bacterial-type ThyA subfamily.</text>
</comment>
<gene>
    <name evidence="1" type="primary">thyA</name>
    <name type="ordered locus">HAPS_1458</name>
</gene>